<proteinExistence type="inferred from homology"/>
<name>RSMI_ECO57</name>
<keyword id="KW-0963">Cytoplasm</keyword>
<keyword id="KW-0489">Methyltransferase</keyword>
<keyword id="KW-1185">Reference proteome</keyword>
<keyword id="KW-0698">rRNA processing</keyword>
<keyword id="KW-0949">S-adenosyl-L-methionine</keyword>
<keyword id="KW-0808">Transferase</keyword>
<feature type="chain" id="PRO_0000211939" description="Ribosomal RNA small subunit methyltransferase I">
    <location>
        <begin position="1"/>
        <end position="286"/>
    </location>
</feature>
<evidence type="ECO:0000255" key="1">
    <source>
        <dbReference type="HAMAP-Rule" id="MF_01877"/>
    </source>
</evidence>
<comment type="function">
    <text evidence="1">Catalyzes the 2'-O-methylation of the ribose of cytidine 1402 (C1402) in 16S rRNA.</text>
</comment>
<comment type="catalytic activity">
    <reaction evidence="1">
        <text>cytidine(1402) in 16S rRNA + S-adenosyl-L-methionine = 2'-O-methylcytidine(1402) in 16S rRNA + S-adenosyl-L-homocysteine + H(+)</text>
        <dbReference type="Rhea" id="RHEA:42924"/>
        <dbReference type="Rhea" id="RHEA-COMP:10285"/>
        <dbReference type="Rhea" id="RHEA-COMP:10286"/>
        <dbReference type="ChEBI" id="CHEBI:15378"/>
        <dbReference type="ChEBI" id="CHEBI:57856"/>
        <dbReference type="ChEBI" id="CHEBI:59789"/>
        <dbReference type="ChEBI" id="CHEBI:74495"/>
        <dbReference type="ChEBI" id="CHEBI:82748"/>
        <dbReference type="EC" id="2.1.1.198"/>
    </reaction>
</comment>
<comment type="subcellular location">
    <subcellularLocation>
        <location evidence="1">Cytoplasm</location>
    </subcellularLocation>
</comment>
<comment type="similarity">
    <text evidence="1">Belongs to the methyltransferase superfamily. RsmI family.</text>
</comment>
<gene>
    <name evidence="1" type="primary">rsmI</name>
    <name type="ordered locus">Z4505</name>
    <name type="ordered locus">ECs4027</name>
</gene>
<accession>P67088</accession>
<accession>P45528</accession>
<organism>
    <name type="scientific">Escherichia coli O157:H7</name>
    <dbReference type="NCBI Taxonomy" id="83334"/>
    <lineage>
        <taxon>Bacteria</taxon>
        <taxon>Pseudomonadati</taxon>
        <taxon>Pseudomonadota</taxon>
        <taxon>Gammaproteobacteria</taxon>
        <taxon>Enterobacterales</taxon>
        <taxon>Enterobacteriaceae</taxon>
        <taxon>Escherichia</taxon>
    </lineage>
</organism>
<protein>
    <recommendedName>
        <fullName evidence="1">Ribosomal RNA small subunit methyltransferase I</fullName>
        <ecNumber evidence="1">2.1.1.198</ecNumber>
    </recommendedName>
    <alternativeName>
        <fullName evidence="1">16S rRNA 2'-O-ribose C1402 methyltransferase</fullName>
    </alternativeName>
    <alternativeName>
        <fullName evidence="1">rRNA (cytidine-2'-O-)-methyltransferase RsmI</fullName>
    </alternativeName>
</protein>
<dbReference type="EC" id="2.1.1.198" evidence="1"/>
<dbReference type="EMBL" id="AE005174">
    <property type="protein sequence ID" value="AAG58282.1"/>
    <property type="molecule type" value="Genomic_DNA"/>
</dbReference>
<dbReference type="EMBL" id="BA000007">
    <property type="protein sequence ID" value="BAB37450.1"/>
    <property type="molecule type" value="Genomic_DNA"/>
</dbReference>
<dbReference type="PIR" id="C91132">
    <property type="entry name" value="C91132"/>
</dbReference>
<dbReference type="PIR" id="F85977">
    <property type="entry name" value="F85977"/>
</dbReference>
<dbReference type="RefSeq" id="NP_312054.1">
    <property type="nucleotide sequence ID" value="NC_002695.1"/>
</dbReference>
<dbReference type="RefSeq" id="WP_000809262.1">
    <property type="nucleotide sequence ID" value="NZ_VOAI01000014.1"/>
</dbReference>
<dbReference type="SMR" id="P67088"/>
<dbReference type="STRING" id="155864.Z4505"/>
<dbReference type="GeneID" id="916135"/>
<dbReference type="GeneID" id="93778838"/>
<dbReference type="KEGG" id="ece:Z4505"/>
<dbReference type="KEGG" id="ecs:ECs_4027"/>
<dbReference type="PATRIC" id="fig|386585.9.peg.4206"/>
<dbReference type="eggNOG" id="COG0313">
    <property type="taxonomic scope" value="Bacteria"/>
</dbReference>
<dbReference type="HOGENOM" id="CLU_044779_4_0_6"/>
<dbReference type="OMA" id="PVVFYES"/>
<dbReference type="Proteomes" id="UP000000558">
    <property type="component" value="Chromosome"/>
</dbReference>
<dbReference type="Proteomes" id="UP000002519">
    <property type="component" value="Chromosome"/>
</dbReference>
<dbReference type="GO" id="GO:0005737">
    <property type="term" value="C:cytoplasm"/>
    <property type="evidence" value="ECO:0007669"/>
    <property type="project" value="UniProtKB-SubCell"/>
</dbReference>
<dbReference type="GO" id="GO:0070677">
    <property type="term" value="F:rRNA (cytosine-2'-O-)-methyltransferase activity"/>
    <property type="evidence" value="ECO:0007669"/>
    <property type="project" value="UniProtKB-UniRule"/>
</dbReference>
<dbReference type="CDD" id="cd11648">
    <property type="entry name" value="RsmI"/>
    <property type="match status" value="1"/>
</dbReference>
<dbReference type="FunFam" id="3.30.950.10:FF:000002">
    <property type="entry name" value="Ribosomal RNA small subunit methyltransferase I"/>
    <property type="match status" value="1"/>
</dbReference>
<dbReference type="FunFam" id="3.40.1010.10:FF:000002">
    <property type="entry name" value="Ribosomal RNA small subunit methyltransferase I"/>
    <property type="match status" value="1"/>
</dbReference>
<dbReference type="Gene3D" id="3.40.1010.10">
    <property type="entry name" value="Cobalt-precorrin-4 Transmethylase, Domain 1"/>
    <property type="match status" value="1"/>
</dbReference>
<dbReference type="Gene3D" id="3.30.950.10">
    <property type="entry name" value="Methyltransferase, Cobalt-precorrin-4 Transmethylase, Domain 2"/>
    <property type="match status" value="1"/>
</dbReference>
<dbReference type="HAMAP" id="MF_01877">
    <property type="entry name" value="16SrRNA_methyltr_I"/>
    <property type="match status" value="1"/>
</dbReference>
<dbReference type="InterPro" id="IPR000878">
    <property type="entry name" value="4pyrrol_Mease"/>
</dbReference>
<dbReference type="InterPro" id="IPR035996">
    <property type="entry name" value="4pyrrol_Methylase_sf"/>
</dbReference>
<dbReference type="InterPro" id="IPR014777">
    <property type="entry name" value="4pyrrole_Mease_sub1"/>
</dbReference>
<dbReference type="InterPro" id="IPR014776">
    <property type="entry name" value="4pyrrole_Mease_sub2"/>
</dbReference>
<dbReference type="InterPro" id="IPR008189">
    <property type="entry name" value="rRNA_ssu_MeTfrase_I"/>
</dbReference>
<dbReference type="InterPro" id="IPR053910">
    <property type="entry name" value="RsmI_HTH"/>
</dbReference>
<dbReference type="InterPro" id="IPR018063">
    <property type="entry name" value="SAM_MeTrfase_RsmI_CS"/>
</dbReference>
<dbReference type="NCBIfam" id="TIGR00096">
    <property type="entry name" value="16S rRNA (cytidine(1402)-2'-O)-methyltransferase"/>
    <property type="match status" value="1"/>
</dbReference>
<dbReference type="NCBIfam" id="NF011570">
    <property type="entry name" value="PRK14994.1"/>
    <property type="match status" value="1"/>
</dbReference>
<dbReference type="PANTHER" id="PTHR46111">
    <property type="entry name" value="RIBOSOMAL RNA SMALL SUBUNIT METHYLTRANSFERASE I"/>
    <property type="match status" value="1"/>
</dbReference>
<dbReference type="PANTHER" id="PTHR46111:SF1">
    <property type="entry name" value="RIBOSOMAL RNA SMALL SUBUNIT METHYLTRANSFERASE I"/>
    <property type="match status" value="1"/>
</dbReference>
<dbReference type="Pfam" id="PF23016">
    <property type="entry name" value="RsmI_C"/>
    <property type="match status" value="1"/>
</dbReference>
<dbReference type="Pfam" id="PF00590">
    <property type="entry name" value="TP_methylase"/>
    <property type="match status" value="1"/>
</dbReference>
<dbReference type="PIRSF" id="PIRSF005917">
    <property type="entry name" value="MTase_YraL"/>
    <property type="match status" value="1"/>
</dbReference>
<dbReference type="SUPFAM" id="SSF53790">
    <property type="entry name" value="Tetrapyrrole methylase"/>
    <property type="match status" value="1"/>
</dbReference>
<dbReference type="PROSITE" id="PS01296">
    <property type="entry name" value="RSMI"/>
    <property type="match status" value="1"/>
</dbReference>
<sequence length="286" mass="31348">MKQHQSADNSQGQLYIVPTPIGNLADITQRALEVLQAVDLIAAEDTRHTGLLLQHFGINARLFALHDHNEQQKAETLLAKLQEGQNIALVSDAGTPLINDPGYHLVRTCREAGIRVVPLPGPCAAITALSAAGLPSDRFCYEGFLPAKSKGRRDALKAIEAEPRTLIFYESTHRLLDSLEDIVAVLGESRYVVLARELTKTWETIHGAPVGELLAWVKEDENRRKGEMVLIVEGHKAQEEDLPADALRTLALLQAELPLKKAAALAAEIHGVKKNALYKYALEQQG</sequence>
<reference key="1">
    <citation type="journal article" date="2001" name="Nature">
        <title>Genome sequence of enterohaemorrhagic Escherichia coli O157:H7.</title>
        <authorList>
            <person name="Perna N.T."/>
            <person name="Plunkett G. III"/>
            <person name="Burland V."/>
            <person name="Mau B."/>
            <person name="Glasner J.D."/>
            <person name="Rose D.J."/>
            <person name="Mayhew G.F."/>
            <person name="Evans P.S."/>
            <person name="Gregor J."/>
            <person name="Kirkpatrick H.A."/>
            <person name="Posfai G."/>
            <person name="Hackett J."/>
            <person name="Klink S."/>
            <person name="Boutin A."/>
            <person name="Shao Y."/>
            <person name="Miller L."/>
            <person name="Grotbeck E.J."/>
            <person name="Davis N.W."/>
            <person name="Lim A."/>
            <person name="Dimalanta E.T."/>
            <person name="Potamousis K."/>
            <person name="Apodaca J."/>
            <person name="Anantharaman T.S."/>
            <person name="Lin J."/>
            <person name="Yen G."/>
            <person name="Schwartz D.C."/>
            <person name="Welch R.A."/>
            <person name="Blattner F.R."/>
        </authorList>
    </citation>
    <scope>NUCLEOTIDE SEQUENCE [LARGE SCALE GENOMIC DNA]</scope>
    <source>
        <strain>O157:H7 / EDL933 / ATCC 700927 / EHEC</strain>
    </source>
</reference>
<reference key="2">
    <citation type="journal article" date="2001" name="DNA Res.">
        <title>Complete genome sequence of enterohemorrhagic Escherichia coli O157:H7 and genomic comparison with a laboratory strain K-12.</title>
        <authorList>
            <person name="Hayashi T."/>
            <person name="Makino K."/>
            <person name="Ohnishi M."/>
            <person name="Kurokawa K."/>
            <person name="Ishii K."/>
            <person name="Yokoyama K."/>
            <person name="Han C.-G."/>
            <person name="Ohtsubo E."/>
            <person name="Nakayama K."/>
            <person name="Murata T."/>
            <person name="Tanaka M."/>
            <person name="Tobe T."/>
            <person name="Iida T."/>
            <person name="Takami H."/>
            <person name="Honda T."/>
            <person name="Sasakawa C."/>
            <person name="Ogasawara N."/>
            <person name="Yasunaga T."/>
            <person name="Kuhara S."/>
            <person name="Shiba T."/>
            <person name="Hattori M."/>
            <person name="Shinagawa H."/>
        </authorList>
    </citation>
    <scope>NUCLEOTIDE SEQUENCE [LARGE SCALE GENOMIC DNA]</scope>
    <source>
        <strain>O157:H7 / Sakai / RIMD 0509952 / EHEC</strain>
    </source>
</reference>